<reference key="1">
    <citation type="journal article" date="2003" name="Genome Res.">
        <title>Comparative genome analysis of Vibrio vulnificus, a marine pathogen.</title>
        <authorList>
            <person name="Chen C.-Y."/>
            <person name="Wu K.-M."/>
            <person name="Chang Y.-C."/>
            <person name="Chang C.-H."/>
            <person name="Tsai H.-C."/>
            <person name="Liao T.-L."/>
            <person name="Liu Y.-M."/>
            <person name="Chen H.-J."/>
            <person name="Shen A.B.-T."/>
            <person name="Li J.-C."/>
            <person name="Su T.-L."/>
            <person name="Shao C.-P."/>
            <person name="Lee C.-T."/>
            <person name="Hor L.-I."/>
            <person name="Tsai S.-F."/>
        </authorList>
    </citation>
    <scope>NUCLEOTIDE SEQUENCE [LARGE SCALE GENOMIC DNA]</scope>
    <source>
        <strain>YJ016</strain>
    </source>
</reference>
<proteinExistence type="inferred from homology"/>
<organism>
    <name type="scientific">Vibrio vulnificus (strain YJ016)</name>
    <dbReference type="NCBI Taxonomy" id="196600"/>
    <lineage>
        <taxon>Bacteria</taxon>
        <taxon>Pseudomonadati</taxon>
        <taxon>Pseudomonadota</taxon>
        <taxon>Gammaproteobacteria</taxon>
        <taxon>Vibrionales</taxon>
        <taxon>Vibrionaceae</taxon>
        <taxon>Vibrio</taxon>
    </lineage>
</organism>
<keyword id="KW-0119">Carbohydrate metabolism</keyword>
<keyword id="KW-0963">Cytoplasm</keyword>
<keyword id="KW-0413">Isomerase</keyword>
<gene>
    <name evidence="1" type="primary">rbsD</name>
    <name type="ordered locus">VVA0568</name>
</gene>
<dbReference type="EC" id="5.4.99.62" evidence="1"/>
<dbReference type="EMBL" id="BA000038">
    <property type="protein sequence ID" value="BAC96594.1"/>
    <property type="molecule type" value="Genomic_DNA"/>
</dbReference>
<dbReference type="RefSeq" id="WP_011081049.1">
    <property type="nucleotide sequence ID" value="NC_005140.1"/>
</dbReference>
<dbReference type="SMR" id="Q7MEV2"/>
<dbReference type="STRING" id="672.VV93_v1c35710"/>
<dbReference type="GeneID" id="93898236"/>
<dbReference type="KEGG" id="vvy:VVA0568"/>
<dbReference type="eggNOG" id="COG1869">
    <property type="taxonomic scope" value="Bacteria"/>
</dbReference>
<dbReference type="HOGENOM" id="CLU_135498_0_0_6"/>
<dbReference type="UniPathway" id="UPA00916">
    <property type="reaction ID" value="UER00888"/>
</dbReference>
<dbReference type="Proteomes" id="UP000002675">
    <property type="component" value="Chromosome II"/>
</dbReference>
<dbReference type="GO" id="GO:0005829">
    <property type="term" value="C:cytosol"/>
    <property type="evidence" value="ECO:0007669"/>
    <property type="project" value="TreeGrafter"/>
</dbReference>
<dbReference type="GO" id="GO:0062193">
    <property type="term" value="F:D-ribose pyranase activity"/>
    <property type="evidence" value="ECO:0007669"/>
    <property type="project" value="UniProtKB-EC"/>
</dbReference>
<dbReference type="GO" id="GO:0016872">
    <property type="term" value="F:intramolecular lyase activity"/>
    <property type="evidence" value="ECO:0007669"/>
    <property type="project" value="UniProtKB-UniRule"/>
</dbReference>
<dbReference type="GO" id="GO:0048029">
    <property type="term" value="F:monosaccharide binding"/>
    <property type="evidence" value="ECO:0007669"/>
    <property type="project" value="InterPro"/>
</dbReference>
<dbReference type="GO" id="GO:0019303">
    <property type="term" value="P:D-ribose catabolic process"/>
    <property type="evidence" value="ECO:0007669"/>
    <property type="project" value="UniProtKB-UniRule"/>
</dbReference>
<dbReference type="Gene3D" id="3.40.1650.10">
    <property type="entry name" value="RbsD-like domain"/>
    <property type="match status" value="1"/>
</dbReference>
<dbReference type="HAMAP" id="MF_01661">
    <property type="entry name" value="D_rib_pyranase"/>
    <property type="match status" value="1"/>
</dbReference>
<dbReference type="InterPro" id="IPR023064">
    <property type="entry name" value="D-ribose_pyranase"/>
</dbReference>
<dbReference type="InterPro" id="IPR023750">
    <property type="entry name" value="RbsD-like_sf"/>
</dbReference>
<dbReference type="InterPro" id="IPR007721">
    <property type="entry name" value="RbsD_FucU"/>
</dbReference>
<dbReference type="NCBIfam" id="NF008761">
    <property type="entry name" value="PRK11797.1"/>
    <property type="match status" value="1"/>
</dbReference>
<dbReference type="PANTHER" id="PTHR37831">
    <property type="entry name" value="D-RIBOSE PYRANASE"/>
    <property type="match status" value="1"/>
</dbReference>
<dbReference type="PANTHER" id="PTHR37831:SF1">
    <property type="entry name" value="D-RIBOSE PYRANASE"/>
    <property type="match status" value="1"/>
</dbReference>
<dbReference type="Pfam" id="PF05025">
    <property type="entry name" value="RbsD_FucU"/>
    <property type="match status" value="1"/>
</dbReference>
<dbReference type="SUPFAM" id="SSF102546">
    <property type="entry name" value="RbsD-like"/>
    <property type="match status" value="1"/>
</dbReference>
<name>RBSD_VIBVY</name>
<sequence length="139" mass="15081">MKKSALLNSELSYLVATLGHTDEITICDAGLPIPDGVSRIDLALTHGVPSFIETVRVMLSESQIEGAIVATEFAEVSPELYQALVAELQCEEEKTGKVLSLTHVSHEEFKQRTESSKAVVRTGECTPYANVIFQAGVVF</sequence>
<feature type="chain" id="PRO_0000346299" description="D-ribose pyranase">
    <location>
        <begin position="1"/>
        <end position="139"/>
    </location>
</feature>
<feature type="active site" description="Proton donor" evidence="1">
    <location>
        <position position="20"/>
    </location>
</feature>
<feature type="binding site" evidence="1">
    <location>
        <position position="28"/>
    </location>
    <ligand>
        <name>substrate</name>
    </ligand>
</feature>
<feature type="binding site" evidence="1">
    <location>
        <position position="106"/>
    </location>
    <ligand>
        <name>substrate</name>
    </ligand>
</feature>
<feature type="binding site" evidence="1">
    <location>
        <begin position="128"/>
        <end position="130"/>
    </location>
    <ligand>
        <name>substrate</name>
    </ligand>
</feature>
<evidence type="ECO:0000255" key="1">
    <source>
        <dbReference type="HAMAP-Rule" id="MF_01661"/>
    </source>
</evidence>
<accession>Q7MEV2</accession>
<comment type="function">
    <text evidence="1">Catalyzes the interconversion of beta-pyran and beta-furan forms of D-ribose.</text>
</comment>
<comment type="catalytic activity">
    <reaction evidence="1">
        <text>beta-D-ribopyranose = beta-D-ribofuranose</text>
        <dbReference type="Rhea" id="RHEA:25432"/>
        <dbReference type="ChEBI" id="CHEBI:27476"/>
        <dbReference type="ChEBI" id="CHEBI:47002"/>
        <dbReference type="EC" id="5.4.99.62"/>
    </reaction>
</comment>
<comment type="pathway">
    <text evidence="1">Carbohydrate metabolism; D-ribose degradation; D-ribose 5-phosphate from beta-D-ribopyranose: step 1/2.</text>
</comment>
<comment type="subunit">
    <text evidence="1">Homodecamer.</text>
</comment>
<comment type="subcellular location">
    <subcellularLocation>
        <location evidence="1">Cytoplasm</location>
    </subcellularLocation>
</comment>
<comment type="similarity">
    <text evidence="1">Belongs to the RbsD / FucU family. RbsD subfamily.</text>
</comment>
<protein>
    <recommendedName>
        <fullName evidence="1">D-ribose pyranase</fullName>
        <ecNumber evidence="1">5.4.99.62</ecNumber>
    </recommendedName>
</protein>